<protein>
    <recommendedName>
        <fullName evidence="1">tRNA N6-adenosine threonylcarbamoyltransferase</fullName>
        <ecNumber evidence="1">2.3.1.234</ecNumber>
    </recommendedName>
    <alternativeName>
        <fullName evidence="1">N6-L-threonylcarbamoyladenine synthase</fullName>
        <shortName evidence="1">t(6)A synthase</shortName>
    </alternativeName>
    <alternativeName>
        <fullName evidence="1">t(6)A37 threonylcarbamoyladenosine biosynthesis protein TsaD</fullName>
    </alternativeName>
    <alternativeName>
        <fullName evidence="1">tRNA threonylcarbamoyladenosine biosynthesis protein TsaD</fullName>
    </alternativeName>
</protein>
<dbReference type="EC" id="2.3.1.234" evidence="1"/>
<dbReference type="EMBL" id="CP000359">
    <property type="protein sequence ID" value="ABF45356.1"/>
    <property type="molecule type" value="Genomic_DNA"/>
</dbReference>
<dbReference type="RefSeq" id="WP_011530193.1">
    <property type="nucleotide sequence ID" value="NC_008025.1"/>
</dbReference>
<dbReference type="SMR" id="Q1IZH8"/>
<dbReference type="STRING" id="319795.Dgeo_1057"/>
<dbReference type="KEGG" id="dge:Dgeo_1057"/>
<dbReference type="eggNOG" id="COG0533">
    <property type="taxonomic scope" value="Bacteria"/>
</dbReference>
<dbReference type="HOGENOM" id="CLU_023208_0_2_0"/>
<dbReference type="Proteomes" id="UP000002431">
    <property type="component" value="Chromosome"/>
</dbReference>
<dbReference type="GO" id="GO:0005737">
    <property type="term" value="C:cytoplasm"/>
    <property type="evidence" value="ECO:0007669"/>
    <property type="project" value="UniProtKB-SubCell"/>
</dbReference>
<dbReference type="GO" id="GO:0005506">
    <property type="term" value="F:iron ion binding"/>
    <property type="evidence" value="ECO:0007669"/>
    <property type="project" value="UniProtKB-UniRule"/>
</dbReference>
<dbReference type="GO" id="GO:0061711">
    <property type="term" value="F:N(6)-L-threonylcarbamoyladenine synthase activity"/>
    <property type="evidence" value="ECO:0007669"/>
    <property type="project" value="UniProtKB-EC"/>
</dbReference>
<dbReference type="GO" id="GO:0002949">
    <property type="term" value="P:tRNA threonylcarbamoyladenosine modification"/>
    <property type="evidence" value="ECO:0007669"/>
    <property type="project" value="UniProtKB-UniRule"/>
</dbReference>
<dbReference type="FunFam" id="3.30.420.40:FF:000012">
    <property type="entry name" value="tRNA N6-adenosine threonylcarbamoyltransferase"/>
    <property type="match status" value="1"/>
</dbReference>
<dbReference type="Gene3D" id="3.30.420.40">
    <property type="match status" value="2"/>
</dbReference>
<dbReference type="HAMAP" id="MF_01445">
    <property type="entry name" value="TsaD"/>
    <property type="match status" value="1"/>
</dbReference>
<dbReference type="InterPro" id="IPR043129">
    <property type="entry name" value="ATPase_NBD"/>
</dbReference>
<dbReference type="InterPro" id="IPR000905">
    <property type="entry name" value="Gcp-like_dom"/>
</dbReference>
<dbReference type="InterPro" id="IPR017861">
    <property type="entry name" value="KAE1/TsaD"/>
</dbReference>
<dbReference type="InterPro" id="IPR017860">
    <property type="entry name" value="Peptidase_M22_CS"/>
</dbReference>
<dbReference type="InterPro" id="IPR022450">
    <property type="entry name" value="TsaD"/>
</dbReference>
<dbReference type="NCBIfam" id="TIGR00329">
    <property type="entry name" value="gcp_kae1"/>
    <property type="match status" value="1"/>
</dbReference>
<dbReference type="NCBIfam" id="TIGR03723">
    <property type="entry name" value="T6A_TsaD_YgjD"/>
    <property type="match status" value="1"/>
</dbReference>
<dbReference type="PANTHER" id="PTHR11735">
    <property type="entry name" value="TRNA N6-ADENOSINE THREONYLCARBAMOYLTRANSFERASE"/>
    <property type="match status" value="1"/>
</dbReference>
<dbReference type="PANTHER" id="PTHR11735:SF6">
    <property type="entry name" value="TRNA N6-ADENOSINE THREONYLCARBAMOYLTRANSFERASE, MITOCHONDRIAL"/>
    <property type="match status" value="1"/>
</dbReference>
<dbReference type="Pfam" id="PF00814">
    <property type="entry name" value="TsaD"/>
    <property type="match status" value="1"/>
</dbReference>
<dbReference type="PRINTS" id="PR00789">
    <property type="entry name" value="OSIALOPTASE"/>
</dbReference>
<dbReference type="SUPFAM" id="SSF53067">
    <property type="entry name" value="Actin-like ATPase domain"/>
    <property type="match status" value="2"/>
</dbReference>
<dbReference type="PROSITE" id="PS01016">
    <property type="entry name" value="GLYCOPROTEASE"/>
    <property type="match status" value="1"/>
</dbReference>
<feature type="chain" id="PRO_0000303345" description="tRNA N6-adenosine threonylcarbamoyltransferase">
    <location>
        <begin position="1"/>
        <end position="333"/>
    </location>
</feature>
<feature type="binding site" evidence="1">
    <location>
        <position position="118"/>
    </location>
    <ligand>
        <name>Fe cation</name>
        <dbReference type="ChEBI" id="CHEBI:24875"/>
    </ligand>
</feature>
<feature type="binding site" evidence="1">
    <location>
        <position position="122"/>
    </location>
    <ligand>
        <name>Fe cation</name>
        <dbReference type="ChEBI" id="CHEBI:24875"/>
    </ligand>
</feature>
<feature type="binding site" evidence="1">
    <location>
        <begin position="140"/>
        <end position="144"/>
    </location>
    <ligand>
        <name>substrate</name>
    </ligand>
</feature>
<feature type="binding site" evidence="1">
    <location>
        <position position="173"/>
    </location>
    <ligand>
        <name>substrate</name>
    </ligand>
</feature>
<feature type="binding site" evidence="1">
    <location>
        <position position="186"/>
    </location>
    <ligand>
        <name>substrate</name>
    </ligand>
</feature>
<feature type="binding site" evidence="1">
    <location>
        <position position="274"/>
    </location>
    <ligand>
        <name>substrate</name>
    </ligand>
</feature>
<feature type="binding site" evidence="1">
    <location>
        <position position="298"/>
    </location>
    <ligand>
        <name>Fe cation</name>
        <dbReference type="ChEBI" id="CHEBI:24875"/>
    </ligand>
</feature>
<sequence>MTFPRYILGIDTSCDDTGVGVVELAPDGSVQVRANRVWSQTVHAQYGGVLPELASREHVERIDTVTGDALAEAGLTVGDLAAVAATSGPGLVGALLVGLMYGKGLAQALNVPFYAAHHLEGHIFAAASEADLQAPYLALVVSGGHTHLFDVPREGEYVLVGATRDDAAGEAFDKVARLAGLGYPGGPAISEAARRGDPEAVPFKEPLQGQKGFDFSFSGLKTAALLAHRAGAKPEDLAAGFERAAVRFLVGTTLRAARAYGRETVVVSGGVAANRALREAFAASPVRAVFPGKGLNTDNGAMIALAGAAAIRAGRAPSPLSEGAVAYAPLASV</sequence>
<evidence type="ECO:0000255" key="1">
    <source>
        <dbReference type="HAMAP-Rule" id="MF_01445"/>
    </source>
</evidence>
<comment type="function">
    <text evidence="1">Required for the formation of a threonylcarbamoyl group on adenosine at position 37 (t(6)A37) in tRNAs that read codons beginning with adenine. Is involved in the transfer of the threonylcarbamoyl moiety of threonylcarbamoyl-AMP (TC-AMP) to the N6 group of A37, together with TsaE and TsaB. TsaD likely plays a direct catalytic role in this reaction.</text>
</comment>
<comment type="catalytic activity">
    <reaction evidence="1">
        <text>L-threonylcarbamoyladenylate + adenosine(37) in tRNA = N(6)-L-threonylcarbamoyladenosine(37) in tRNA + AMP + H(+)</text>
        <dbReference type="Rhea" id="RHEA:37059"/>
        <dbReference type="Rhea" id="RHEA-COMP:10162"/>
        <dbReference type="Rhea" id="RHEA-COMP:10163"/>
        <dbReference type="ChEBI" id="CHEBI:15378"/>
        <dbReference type="ChEBI" id="CHEBI:73682"/>
        <dbReference type="ChEBI" id="CHEBI:74411"/>
        <dbReference type="ChEBI" id="CHEBI:74418"/>
        <dbReference type="ChEBI" id="CHEBI:456215"/>
        <dbReference type="EC" id="2.3.1.234"/>
    </reaction>
</comment>
<comment type="cofactor">
    <cofactor evidence="1">
        <name>Fe(2+)</name>
        <dbReference type="ChEBI" id="CHEBI:29033"/>
    </cofactor>
    <text evidence="1">Binds 1 Fe(2+) ion per subunit.</text>
</comment>
<comment type="subcellular location">
    <subcellularLocation>
        <location evidence="1">Cytoplasm</location>
    </subcellularLocation>
</comment>
<comment type="similarity">
    <text evidence="1">Belongs to the KAE1 / TsaD family.</text>
</comment>
<gene>
    <name evidence="1" type="primary">tsaD</name>
    <name type="synonym">gcp</name>
    <name type="ordered locus">Dgeo_1057</name>
</gene>
<keyword id="KW-0012">Acyltransferase</keyword>
<keyword id="KW-0963">Cytoplasm</keyword>
<keyword id="KW-0408">Iron</keyword>
<keyword id="KW-0479">Metal-binding</keyword>
<keyword id="KW-0808">Transferase</keyword>
<keyword id="KW-0819">tRNA processing</keyword>
<proteinExistence type="inferred from homology"/>
<reference key="1">
    <citation type="submission" date="2006-04" db="EMBL/GenBank/DDBJ databases">
        <title>Complete sequence of chromosome of Deinococcus geothermalis DSM 11300.</title>
        <authorList>
            <person name="Copeland A."/>
            <person name="Lucas S."/>
            <person name="Lapidus A."/>
            <person name="Barry K."/>
            <person name="Detter J.C."/>
            <person name="Glavina del Rio T."/>
            <person name="Hammon N."/>
            <person name="Israni S."/>
            <person name="Dalin E."/>
            <person name="Tice H."/>
            <person name="Pitluck S."/>
            <person name="Brettin T."/>
            <person name="Bruce D."/>
            <person name="Han C."/>
            <person name="Tapia R."/>
            <person name="Saunders E."/>
            <person name="Gilna P."/>
            <person name="Schmutz J."/>
            <person name="Larimer F."/>
            <person name="Land M."/>
            <person name="Hauser L."/>
            <person name="Kyrpides N."/>
            <person name="Kim E."/>
            <person name="Daly M.J."/>
            <person name="Fredrickson J.K."/>
            <person name="Makarova K.S."/>
            <person name="Gaidamakova E.K."/>
            <person name="Zhai M."/>
            <person name="Richardson P."/>
        </authorList>
    </citation>
    <scope>NUCLEOTIDE SEQUENCE [LARGE SCALE GENOMIC DNA]</scope>
    <source>
        <strain>DSM 11300 / CIP 105573 / AG-3a</strain>
    </source>
</reference>
<name>TSAD_DEIGD</name>
<accession>Q1IZH8</accession>
<organism>
    <name type="scientific">Deinococcus geothermalis (strain DSM 11300 / CIP 105573 / AG-3a)</name>
    <dbReference type="NCBI Taxonomy" id="319795"/>
    <lineage>
        <taxon>Bacteria</taxon>
        <taxon>Thermotogati</taxon>
        <taxon>Deinococcota</taxon>
        <taxon>Deinococci</taxon>
        <taxon>Deinococcales</taxon>
        <taxon>Deinococcaceae</taxon>
        <taxon>Deinococcus</taxon>
    </lineage>
</organism>